<protein>
    <recommendedName>
        <fullName evidence="1">CTP synthase</fullName>
        <ecNumber evidence="1">6.3.4.2</ecNumber>
    </recommendedName>
    <alternativeName>
        <fullName evidence="1">Cytidine 5'-triphosphate synthase</fullName>
    </alternativeName>
    <alternativeName>
        <fullName evidence="1">Cytidine triphosphate synthetase</fullName>
        <shortName evidence="1">CTP synthetase</shortName>
        <shortName evidence="1">CTPS</shortName>
    </alternativeName>
    <alternativeName>
        <fullName evidence="1">UTP--ammonia ligase</fullName>
    </alternativeName>
</protein>
<reference key="1">
    <citation type="submission" date="2007-02" db="EMBL/GenBank/DDBJ databases">
        <title>Complete sequence of chromosome of Yersinia pestis Pestoides F.</title>
        <authorList>
            <consortium name="US DOE Joint Genome Institute"/>
            <person name="Copeland A."/>
            <person name="Lucas S."/>
            <person name="Lapidus A."/>
            <person name="Barry K."/>
            <person name="Detter J.C."/>
            <person name="Glavina del Rio T."/>
            <person name="Hammon N."/>
            <person name="Israni S."/>
            <person name="Dalin E."/>
            <person name="Tice H."/>
            <person name="Pitluck S."/>
            <person name="Di Bartolo G."/>
            <person name="Chain P."/>
            <person name="Malfatti S."/>
            <person name="Shin M."/>
            <person name="Vergez L."/>
            <person name="Schmutz J."/>
            <person name="Larimer F."/>
            <person name="Land M."/>
            <person name="Hauser L."/>
            <person name="Worsham P."/>
            <person name="Chu M."/>
            <person name="Bearden S."/>
            <person name="Garcia E."/>
            <person name="Richardson P."/>
        </authorList>
    </citation>
    <scope>NUCLEOTIDE SEQUENCE [LARGE SCALE GENOMIC DNA]</scope>
    <source>
        <strain>Pestoides F</strain>
    </source>
</reference>
<comment type="function">
    <text evidence="1">Catalyzes the ATP-dependent amination of UTP to CTP with either L-glutamine or ammonia as the source of nitrogen. Regulates intracellular CTP levels through interactions with the four ribonucleotide triphosphates.</text>
</comment>
<comment type="catalytic activity">
    <reaction evidence="1">
        <text>UTP + L-glutamine + ATP + H2O = CTP + L-glutamate + ADP + phosphate + 2 H(+)</text>
        <dbReference type="Rhea" id="RHEA:26426"/>
        <dbReference type="ChEBI" id="CHEBI:15377"/>
        <dbReference type="ChEBI" id="CHEBI:15378"/>
        <dbReference type="ChEBI" id="CHEBI:29985"/>
        <dbReference type="ChEBI" id="CHEBI:30616"/>
        <dbReference type="ChEBI" id="CHEBI:37563"/>
        <dbReference type="ChEBI" id="CHEBI:43474"/>
        <dbReference type="ChEBI" id="CHEBI:46398"/>
        <dbReference type="ChEBI" id="CHEBI:58359"/>
        <dbReference type="ChEBI" id="CHEBI:456216"/>
        <dbReference type="EC" id="6.3.4.2"/>
    </reaction>
</comment>
<comment type="catalytic activity">
    <reaction evidence="1">
        <text>L-glutamine + H2O = L-glutamate + NH4(+)</text>
        <dbReference type="Rhea" id="RHEA:15889"/>
        <dbReference type="ChEBI" id="CHEBI:15377"/>
        <dbReference type="ChEBI" id="CHEBI:28938"/>
        <dbReference type="ChEBI" id="CHEBI:29985"/>
        <dbReference type="ChEBI" id="CHEBI:58359"/>
    </reaction>
</comment>
<comment type="catalytic activity">
    <reaction evidence="1">
        <text>UTP + NH4(+) + ATP = CTP + ADP + phosphate + 2 H(+)</text>
        <dbReference type="Rhea" id="RHEA:16597"/>
        <dbReference type="ChEBI" id="CHEBI:15378"/>
        <dbReference type="ChEBI" id="CHEBI:28938"/>
        <dbReference type="ChEBI" id="CHEBI:30616"/>
        <dbReference type="ChEBI" id="CHEBI:37563"/>
        <dbReference type="ChEBI" id="CHEBI:43474"/>
        <dbReference type="ChEBI" id="CHEBI:46398"/>
        <dbReference type="ChEBI" id="CHEBI:456216"/>
    </reaction>
</comment>
<comment type="activity regulation">
    <text evidence="1">Allosterically activated by GTP, when glutamine is the substrate; GTP has no effect on the reaction when ammonia is the substrate. The allosteric effector GTP functions by stabilizing the protein conformation that binds the tetrahedral intermediate(s) formed during glutamine hydrolysis. Inhibited by the product CTP, via allosteric rather than competitive inhibition.</text>
</comment>
<comment type="pathway">
    <text evidence="1">Pyrimidine metabolism; CTP biosynthesis via de novo pathway; CTP from UDP: step 2/2.</text>
</comment>
<comment type="subunit">
    <text evidence="1">Homotetramer.</text>
</comment>
<comment type="miscellaneous">
    <text evidence="1">CTPSs have evolved a hybrid strategy for distinguishing between UTP and CTP. The overlapping regions of the product feedback inhibitory and substrate sites recognize a common feature in both compounds, the triphosphate moiety. To differentiate isosteric substrate and product pyrimidine rings, an additional pocket far from the expected kinase/ligase catalytic site, specifically recognizes the cytosine and ribose portions of the product inhibitor.</text>
</comment>
<comment type="similarity">
    <text evidence="1">Belongs to the CTP synthase family.</text>
</comment>
<proteinExistence type="inferred from homology"/>
<feature type="chain" id="PRO_1000139610" description="CTP synthase">
    <location>
        <begin position="1"/>
        <end position="545"/>
    </location>
</feature>
<feature type="domain" description="Glutamine amidotransferase type-1" evidence="1">
    <location>
        <begin position="291"/>
        <end position="542"/>
    </location>
</feature>
<feature type="region of interest" description="Amidoligase domain" evidence="1">
    <location>
        <begin position="1"/>
        <end position="266"/>
    </location>
</feature>
<feature type="active site" description="Nucleophile; for glutamine hydrolysis" evidence="1">
    <location>
        <position position="379"/>
    </location>
</feature>
<feature type="active site" evidence="1">
    <location>
        <position position="515"/>
    </location>
</feature>
<feature type="active site" evidence="1">
    <location>
        <position position="517"/>
    </location>
</feature>
<feature type="binding site" evidence="1">
    <location>
        <position position="14"/>
    </location>
    <ligand>
        <name>CTP</name>
        <dbReference type="ChEBI" id="CHEBI:37563"/>
        <note>allosteric inhibitor</note>
    </ligand>
</feature>
<feature type="binding site" evidence="1">
    <location>
        <position position="14"/>
    </location>
    <ligand>
        <name>UTP</name>
        <dbReference type="ChEBI" id="CHEBI:46398"/>
    </ligand>
</feature>
<feature type="binding site" evidence="1">
    <location>
        <begin position="15"/>
        <end position="20"/>
    </location>
    <ligand>
        <name>ATP</name>
        <dbReference type="ChEBI" id="CHEBI:30616"/>
    </ligand>
</feature>
<feature type="binding site" evidence="1">
    <location>
        <position position="72"/>
    </location>
    <ligand>
        <name>ATP</name>
        <dbReference type="ChEBI" id="CHEBI:30616"/>
    </ligand>
</feature>
<feature type="binding site" evidence="1">
    <location>
        <position position="72"/>
    </location>
    <ligand>
        <name>Mg(2+)</name>
        <dbReference type="ChEBI" id="CHEBI:18420"/>
    </ligand>
</feature>
<feature type="binding site" evidence="1">
    <location>
        <position position="140"/>
    </location>
    <ligand>
        <name>Mg(2+)</name>
        <dbReference type="ChEBI" id="CHEBI:18420"/>
    </ligand>
</feature>
<feature type="binding site" evidence="1">
    <location>
        <begin position="147"/>
        <end position="149"/>
    </location>
    <ligand>
        <name>CTP</name>
        <dbReference type="ChEBI" id="CHEBI:37563"/>
        <note>allosteric inhibitor</note>
    </ligand>
</feature>
<feature type="binding site" evidence="1">
    <location>
        <begin position="187"/>
        <end position="192"/>
    </location>
    <ligand>
        <name>CTP</name>
        <dbReference type="ChEBI" id="CHEBI:37563"/>
        <note>allosteric inhibitor</note>
    </ligand>
</feature>
<feature type="binding site" evidence="1">
    <location>
        <begin position="187"/>
        <end position="192"/>
    </location>
    <ligand>
        <name>UTP</name>
        <dbReference type="ChEBI" id="CHEBI:46398"/>
    </ligand>
</feature>
<feature type="binding site" evidence="1">
    <location>
        <position position="223"/>
    </location>
    <ligand>
        <name>CTP</name>
        <dbReference type="ChEBI" id="CHEBI:37563"/>
        <note>allosteric inhibitor</note>
    </ligand>
</feature>
<feature type="binding site" evidence="1">
    <location>
        <position position="223"/>
    </location>
    <ligand>
        <name>UTP</name>
        <dbReference type="ChEBI" id="CHEBI:46398"/>
    </ligand>
</feature>
<feature type="binding site" evidence="1">
    <location>
        <begin position="239"/>
        <end position="241"/>
    </location>
    <ligand>
        <name>ATP</name>
        <dbReference type="ChEBI" id="CHEBI:30616"/>
    </ligand>
</feature>
<feature type="binding site" evidence="1">
    <location>
        <position position="352"/>
    </location>
    <ligand>
        <name>L-glutamine</name>
        <dbReference type="ChEBI" id="CHEBI:58359"/>
    </ligand>
</feature>
<feature type="binding site" evidence="1">
    <location>
        <begin position="380"/>
        <end position="383"/>
    </location>
    <ligand>
        <name>L-glutamine</name>
        <dbReference type="ChEBI" id="CHEBI:58359"/>
    </ligand>
</feature>
<feature type="binding site" evidence="1">
    <location>
        <position position="403"/>
    </location>
    <ligand>
        <name>L-glutamine</name>
        <dbReference type="ChEBI" id="CHEBI:58359"/>
    </ligand>
</feature>
<feature type="binding site" evidence="1">
    <location>
        <position position="470"/>
    </location>
    <ligand>
        <name>L-glutamine</name>
        <dbReference type="ChEBI" id="CHEBI:58359"/>
    </ligand>
</feature>
<evidence type="ECO:0000255" key="1">
    <source>
        <dbReference type="HAMAP-Rule" id="MF_01227"/>
    </source>
</evidence>
<dbReference type="EC" id="6.3.4.2" evidence="1"/>
<dbReference type="EMBL" id="CP000668">
    <property type="protein sequence ID" value="ABP41342.1"/>
    <property type="molecule type" value="Genomic_DNA"/>
</dbReference>
<dbReference type="RefSeq" id="WP_002209376.1">
    <property type="nucleotide sequence ID" value="NZ_CP009715.1"/>
</dbReference>
<dbReference type="SMR" id="A4TPY0"/>
<dbReference type="MEROPS" id="C26.964"/>
<dbReference type="GeneID" id="96664251"/>
<dbReference type="KEGG" id="ypp:YPDSF_2982"/>
<dbReference type="PATRIC" id="fig|386656.14.peg.1382"/>
<dbReference type="UniPathway" id="UPA00159">
    <property type="reaction ID" value="UER00277"/>
</dbReference>
<dbReference type="GO" id="GO:0005829">
    <property type="term" value="C:cytosol"/>
    <property type="evidence" value="ECO:0007669"/>
    <property type="project" value="TreeGrafter"/>
</dbReference>
<dbReference type="GO" id="GO:0005524">
    <property type="term" value="F:ATP binding"/>
    <property type="evidence" value="ECO:0007669"/>
    <property type="project" value="UniProtKB-KW"/>
</dbReference>
<dbReference type="GO" id="GO:0003883">
    <property type="term" value="F:CTP synthase activity"/>
    <property type="evidence" value="ECO:0007669"/>
    <property type="project" value="UniProtKB-UniRule"/>
</dbReference>
<dbReference type="GO" id="GO:0004359">
    <property type="term" value="F:glutaminase activity"/>
    <property type="evidence" value="ECO:0007669"/>
    <property type="project" value="RHEA"/>
</dbReference>
<dbReference type="GO" id="GO:0042802">
    <property type="term" value="F:identical protein binding"/>
    <property type="evidence" value="ECO:0007669"/>
    <property type="project" value="TreeGrafter"/>
</dbReference>
<dbReference type="GO" id="GO:0046872">
    <property type="term" value="F:metal ion binding"/>
    <property type="evidence" value="ECO:0007669"/>
    <property type="project" value="UniProtKB-KW"/>
</dbReference>
<dbReference type="GO" id="GO:0044210">
    <property type="term" value="P:'de novo' CTP biosynthetic process"/>
    <property type="evidence" value="ECO:0007669"/>
    <property type="project" value="UniProtKB-UniRule"/>
</dbReference>
<dbReference type="GO" id="GO:0019856">
    <property type="term" value="P:pyrimidine nucleobase biosynthetic process"/>
    <property type="evidence" value="ECO:0007669"/>
    <property type="project" value="TreeGrafter"/>
</dbReference>
<dbReference type="CDD" id="cd03113">
    <property type="entry name" value="CTPS_N"/>
    <property type="match status" value="1"/>
</dbReference>
<dbReference type="CDD" id="cd01746">
    <property type="entry name" value="GATase1_CTP_Synthase"/>
    <property type="match status" value="1"/>
</dbReference>
<dbReference type="FunFam" id="3.40.50.300:FF:000009">
    <property type="entry name" value="CTP synthase"/>
    <property type="match status" value="1"/>
</dbReference>
<dbReference type="FunFam" id="3.40.50.880:FF:000002">
    <property type="entry name" value="CTP synthase"/>
    <property type="match status" value="1"/>
</dbReference>
<dbReference type="Gene3D" id="3.40.50.880">
    <property type="match status" value="1"/>
</dbReference>
<dbReference type="Gene3D" id="3.40.50.300">
    <property type="entry name" value="P-loop containing nucleotide triphosphate hydrolases"/>
    <property type="match status" value="1"/>
</dbReference>
<dbReference type="HAMAP" id="MF_01227">
    <property type="entry name" value="PyrG"/>
    <property type="match status" value="1"/>
</dbReference>
<dbReference type="InterPro" id="IPR029062">
    <property type="entry name" value="Class_I_gatase-like"/>
</dbReference>
<dbReference type="InterPro" id="IPR004468">
    <property type="entry name" value="CTP_synthase"/>
</dbReference>
<dbReference type="InterPro" id="IPR017456">
    <property type="entry name" value="CTP_synthase_N"/>
</dbReference>
<dbReference type="InterPro" id="IPR017926">
    <property type="entry name" value="GATASE"/>
</dbReference>
<dbReference type="InterPro" id="IPR033828">
    <property type="entry name" value="GATase1_CTP_Synthase"/>
</dbReference>
<dbReference type="InterPro" id="IPR027417">
    <property type="entry name" value="P-loop_NTPase"/>
</dbReference>
<dbReference type="NCBIfam" id="NF003792">
    <property type="entry name" value="PRK05380.1"/>
    <property type="match status" value="1"/>
</dbReference>
<dbReference type="NCBIfam" id="TIGR00337">
    <property type="entry name" value="PyrG"/>
    <property type="match status" value="1"/>
</dbReference>
<dbReference type="PANTHER" id="PTHR11550">
    <property type="entry name" value="CTP SYNTHASE"/>
    <property type="match status" value="1"/>
</dbReference>
<dbReference type="PANTHER" id="PTHR11550:SF0">
    <property type="entry name" value="CTP SYNTHASE-RELATED"/>
    <property type="match status" value="1"/>
</dbReference>
<dbReference type="Pfam" id="PF06418">
    <property type="entry name" value="CTP_synth_N"/>
    <property type="match status" value="1"/>
</dbReference>
<dbReference type="Pfam" id="PF00117">
    <property type="entry name" value="GATase"/>
    <property type="match status" value="1"/>
</dbReference>
<dbReference type="SUPFAM" id="SSF52317">
    <property type="entry name" value="Class I glutamine amidotransferase-like"/>
    <property type="match status" value="1"/>
</dbReference>
<dbReference type="SUPFAM" id="SSF52540">
    <property type="entry name" value="P-loop containing nucleoside triphosphate hydrolases"/>
    <property type="match status" value="1"/>
</dbReference>
<dbReference type="PROSITE" id="PS51273">
    <property type="entry name" value="GATASE_TYPE_1"/>
    <property type="match status" value="1"/>
</dbReference>
<sequence length="545" mass="60363">MTTNYIFVTGGVVSSLGKGIAAASLAAILEARGLNVTIMKLDPYINVDPGTMSPTQHGEVFVTEDGAETDLDLGHYERFIRTKMTRRNNFTTGRIYSEVLRKERRGDYLGATIQVIPHITNAIKERIIEGGEGHDVVLVEIGGTVGDIESLPFLEAIRQMAVDVGREHTLYMHLTLVPYLAAAGEVKTKPTQHSVKELLSIGIQPDVLICRSDRAVPANERAKIALFCNVPEKAVISLKDVDSIYKIPGLLKSQGLDDYICKRFSLTCPEANLAEWEQVLYEESNPGGEVTIGMIGKYVELPDAYKSVIEALKHGGLKNRLTVNIKLIDSQDVETRGEEMLKELDAILIPGGFGYRGVEGKVLAARYAREHNIPYLGICLGMQVALMEFARNVAGMENANSTEFVPDCKYPVVALITEWRDEDGNVEIRTEESDLGGTMRVGGQQCHLTEGSLVRQMYGEPTIVERHRHRYEVNNMLLKQIEAAGLRVAGRSADNKLVEIIELPDHPWFVACQFHPEFTSTPRDGHPLFAGFVKAAGDYQKRQVK</sequence>
<keyword id="KW-0067">ATP-binding</keyword>
<keyword id="KW-0315">Glutamine amidotransferase</keyword>
<keyword id="KW-0436">Ligase</keyword>
<keyword id="KW-0460">Magnesium</keyword>
<keyword id="KW-0479">Metal-binding</keyword>
<keyword id="KW-0547">Nucleotide-binding</keyword>
<keyword id="KW-0665">Pyrimidine biosynthesis</keyword>
<name>PYRG_YERPP</name>
<accession>A4TPY0</accession>
<organism>
    <name type="scientific">Yersinia pestis (strain Pestoides F)</name>
    <dbReference type="NCBI Taxonomy" id="386656"/>
    <lineage>
        <taxon>Bacteria</taxon>
        <taxon>Pseudomonadati</taxon>
        <taxon>Pseudomonadota</taxon>
        <taxon>Gammaproteobacteria</taxon>
        <taxon>Enterobacterales</taxon>
        <taxon>Yersiniaceae</taxon>
        <taxon>Yersinia</taxon>
    </lineage>
</organism>
<gene>
    <name evidence="1" type="primary">pyrG</name>
    <name type="ordered locus">YPDSF_2982</name>
</gene>